<comment type="subcellular location">
    <subcellularLocation>
        <location evidence="3">Cytoplasm</location>
    </subcellularLocation>
    <subcellularLocation>
        <location evidence="3">Nucleus</location>
    </subcellularLocation>
</comment>
<comment type="similarity">
    <text evidence="4">Belongs to the short-chain dehydrogenases/reductases (SDR) family.</text>
</comment>
<gene>
    <name type="ORF">SPAC977.08</name>
</gene>
<accession>P0CU00</accession>
<accession>Q9P324</accession>
<sequence>MREPKNAKVLSRLENVLVTQLDVNNFSSIKKSVEKAISHFGRIDVLLNNAGYSVYSPLESTTEEQIHNIFNTNVFGALEVIKAITPIFRSQHNGMIINVSSIGGKMTFPLGCLYYGTKYAIEGISEALTWEMQSIGVKVKIIEPGFTATEFRVEEGAGKHYAEYDNLKQKLYEDLLPKLKTATPPQKIAEVILQAATDESDELRYPTGDYVVEWMALRSKVDDATFLATHRKQMGL</sequence>
<organism>
    <name type="scientific">Schizosaccharomyces pombe (strain 972 / ATCC 24843)</name>
    <name type="common">Fission yeast</name>
    <dbReference type="NCBI Taxonomy" id="284812"/>
    <lineage>
        <taxon>Eukaryota</taxon>
        <taxon>Fungi</taxon>
        <taxon>Dikarya</taxon>
        <taxon>Ascomycota</taxon>
        <taxon>Taphrinomycotina</taxon>
        <taxon>Schizosaccharomycetes</taxon>
        <taxon>Schizosaccharomycetales</taxon>
        <taxon>Schizosaccharomycetaceae</taxon>
        <taxon>Schizosaccharomyces</taxon>
    </lineage>
</organism>
<evidence type="ECO:0000250" key="1">
    <source>
        <dbReference type="UniProtKB" id="L0E2Z4"/>
    </source>
</evidence>
<evidence type="ECO:0000250" key="2">
    <source>
        <dbReference type="UniProtKB" id="O93868"/>
    </source>
</evidence>
<evidence type="ECO:0000269" key="3">
    <source>
    </source>
</evidence>
<evidence type="ECO:0000305" key="4"/>
<reference key="1">
    <citation type="journal article" date="2002" name="Nature">
        <title>The genome sequence of Schizosaccharomyces pombe.</title>
        <authorList>
            <person name="Wood V."/>
            <person name="Gwilliam R."/>
            <person name="Rajandream M.A."/>
            <person name="Lyne M.H."/>
            <person name="Lyne R."/>
            <person name="Stewart A."/>
            <person name="Sgouros J.G."/>
            <person name="Peat N."/>
            <person name="Hayles J."/>
            <person name="Baker S.G."/>
            <person name="Basham D."/>
            <person name="Bowman S."/>
            <person name="Brooks K."/>
            <person name="Brown D."/>
            <person name="Brown S."/>
            <person name="Chillingworth T."/>
            <person name="Churcher C.M."/>
            <person name="Collins M."/>
            <person name="Connor R."/>
            <person name="Cronin A."/>
            <person name="Davis P."/>
            <person name="Feltwell T."/>
            <person name="Fraser A."/>
            <person name="Gentles S."/>
            <person name="Goble A."/>
            <person name="Hamlin N."/>
            <person name="Harris D.E."/>
            <person name="Hidalgo J."/>
            <person name="Hodgson G."/>
            <person name="Holroyd S."/>
            <person name="Hornsby T."/>
            <person name="Howarth S."/>
            <person name="Huckle E.J."/>
            <person name="Hunt S."/>
            <person name="Jagels K."/>
            <person name="James K.D."/>
            <person name="Jones L."/>
            <person name="Jones M."/>
            <person name="Leather S."/>
            <person name="McDonald S."/>
            <person name="McLean J."/>
            <person name="Mooney P."/>
            <person name="Moule S."/>
            <person name="Mungall K.L."/>
            <person name="Murphy L.D."/>
            <person name="Niblett D."/>
            <person name="Odell C."/>
            <person name="Oliver K."/>
            <person name="O'Neil S."/>
            <person name="Pearson D."/>
            <person name="Quail M.A."/>
            <person name="Rabbinowitsch E."/>
            <person name="Rutherford K.M."/>
            <person name="Rutter S."/>
            <person name="Saunders D."/>
            <person name="Seeger K."/>
            <person name="Sharp S."/>
            <person name="Skelton J."/>
            <person name="Simmonds M.N."/>
            <person name="Squares R."/>
            <person name="Squares S."/>
            <person name="Stevens K."/>
            <person name="Taylor K."/>
            <person name="Taylor R.G."/>
            <person name="Tivey A."/>
            <person name="Walsh S.V."/>
            <person name="Warren T."/>
            <person name="Whitehead S."/>
            <person name="Woodward J.R."/>
            <person name="Volckaert G."/>
            <person name="Aert R."/>
            <person name="Robben J."/>
            <person name="Grymonprez B."/>
            <person name="Weltjens I."/>
            <person name="Vanstreels E."/>
            <person name="Rieger M."/>
            <person name="Schaefer M."/>
            <person name="Mueller-Auer S."/>
            <person name="Gabel C."/>
            <person name="Fuchs M."/>
            <person name="Duesterhoeft A."/>
            <person name="Fritzc C."/>
            <person name="Holzer E."/>
            <person name="Moestl D."/>
            <person name="Hilbert H."/>
            <person name="Borzym K."/>
            <person name="Langer I."/>
            <person name="Beck A."/>
            <person name="Lehrach H."/>
            <person name="Reinhardt R."/>
            <person name="Pohl T.M."/>
            <person name="Eger P."/>
            <person name="Zimmermann W."/>
            <person name="Wedler H."/>
            <person name="Wambutt R."/>
            <person name="Purnelle B."/>
            <person name="Goffeau A."/>
            <person name="Cadieu E."/>
            <person name="Dreano S."/>
            <person name="Gloux S."/>
            <person name="Lelaure V."/>
            <person name="Mottier S."/>
            <person name="Galibert F."/>
            <person name="Aves S.J."/>
            <person name="Xiang Z."/>
            <person name="Hunt C."/>
            <person name="Moore K."/>
            <person name="Hurst S.M."/>
            <person name="Lucas M."/>
            <person name="Rochet M."/>
            <person name="Gaillardin C."/>
            <person name="Tallada V.A."/>
            <person name="Garzon A."/>
            <person name="Thode G."/>
            <person name="Daga R.R."/>
            <person name="Cruzado L."/>
            <person name="Jimenez J."/>
            <person name="Sanchez M."/>
            <person name="del Rey F."/>
            <person name="Benito J."/>
            <person name="Dominguez A."/>
            <person name="Revuelta J.L."/>
            <person name="Moreno S."/>
            <person name="Armstrong J."/>
            <person name="Forsburg S.L."/>
            <person name="Cerutti L."/>
            <person name="Lowe T."/>
            <person name="McCombie W.R."/>
            <person name="Paulsen I."/>
            <person name="Potashkin J."/>
            <person name="Shpakovski G.V."/>
            <person name="Ussery D."/>
            <person name="Barrell B.G."/>
            <person name="Nurse P."/>
        </authorList>
    </citation>
    <scope>NUCLEOTIDE SEQUENCE [LARGE SCALE GENOMIC DNA]</scope>
    <source>
        <strain>972 / ATCC 24843</strain>
    </source>
</reference>
<reference key="2">
    <citation type="journal article" date="2006" name="Nat. Biotechnol.">
        <title>ORFeome cloning and global analysis of protein localization in the fission yeast Schizosaccharomyces pombe.</title>
        <authorList>
            <person name="Matsuyama A."/>
            <person name="Arai R."/>
            <person name="Yashiroda Y."/>
            <person name="Shirai A."/>
            <person name="Kamata A."/>
            <person name="Sekido S."/>
            <person name="Kobayashi Y."/>
            <person name="Hashimoto A."/>
            <person name="Hamamoto M."/>
            <person name="Hiraoka Y."/>
            <person name="Horinouchi S."/>
            <person name="Yoshida M."/>
        </authorList>
    </citation>
    <scope>SUBCELLULAR LOCATION [LARGE SCALE ANALYSIS]</scope>
</reference>
<keyword id="KW-0963">Cytoplasm</keyword>
<keyword id="KW-0521">NADP</keyword>
<keyword id="KW-0539">Nucleus</keyword>
<keyword id="KW-0560">Oxidoreductase</keyword>
<keyword id="KW-1185">Reference proteome</keyword>
<feature type="chain" id="PRO_0000437227" description="Uncharacterized oxidoreductase SPAC977.08">
    <location>
        <begin position="1"/>
        <end position="236"/>
    </location>
</feature>
<feature type="active site" description="Proton donor" evidence="2">
    <location>
        <position position="100"/>
    </location>
</feature>
<feature type="active site" description="Proton donor" evidence="2">
    <location>
        <position position="114"/>
    </location>
</feature>
<feature type="active site" description="Lowers pKa of active site Tyr" evidence="2">
    <location>
        <position position="118"/>
    </location>
</feature>
<feature type="binding site" evidence="1">
    <location>
        <position position="22"/>
    </location>
    <ligand>
        <name>NADP(+)</name>
        <dbReference type="ChEBI" id="CHEBI:58349"/>
    </ligand>
</feature>
<feature type="binding site" evidence="2">
    <location>
        <position position="49"/>
    </location>
    <ligand>
        <name>NADP(+)</name>
        <dbReference type="ChEBI" id="CHEBI:58349"/>
    </ligand>
</feature>
<feature type="binding site" evidence="1">
    <location>
        <position position="82"/>
    </location>
    <ligand>
        <name>NADP(+)</name>
        <dbReference type="ChEBI" id="CHEBI:58349"/>
    </ligand>
</feature>
<feature type="binding site" evidence="2">
    <location>
        <position position="114"/>
    </location>
    <ligand>
        <name>NADP(+)</name>
        <dbReference type="ChEBI" id="CHEBI:58349"/>
    </ligand>
</feature>
<feature type="binding site" evidence="2">
    <location>
        <position position="118"/>
    </location>
    <ligand>
        <name>NADP(+)</name>
        <dbReference type="ChEBI" id="CHEBI:58349"/>
    </ligand>
</feature>
<proteinExistence type="inferred from homology"/>
<dbReference type="EC" id="1.-.-.-"/>
<dbReference type="EMBL" id="CU329670">
    <property type="protein sequence ID" value="CAB69630.1"/>
    <property type="molecule type" value="Genomic_DNA"/>
</dbReference>
<dbReference type="PIR" id="T50280">
    <property type="entry name" value="T50280"/>
</dbReference>
<dbReference type="RefSeq" id="NP_592771.1">
    <property type="nucleotide sequence ID" value="NM_001020934.1"/>
</dbReference>
<dbReference type="SMR" id="P0CU00"/>
<dbReference type="FunCoup" id="P0CU00">
    <property type="interactions" value="1"/>
</dbReference>
<dbReference type="STRING" id="284812.P0CU00"/>
<dbReference type="EnsemblFungi" id="SPAC977.08.1">
    <property type="protein sequence ID" value="SPAC977.08.1:pep"/>
    <property type="gene ID" value="SPAC977.08"/>
</dbReference>
<dbReference type="EnsemblFungi" id="SPBC1348.09.1">
    <property type="protein sequence ID" value="SPBC1348.09.1:pep"/>
    <property type="gene ID" value="SPBC1348.09"/>
</dbReference>
<dbReference type="KEGG" id="spo:2541718"/>
<dbReference type="KEGG" id="spo:2543330"/>
<dbReference type="PomBase" id="SPAC977.08"/>
<dbReference type="VEuPathDB" id="FungiDB:SPAC977.08"/>
<dbReference type="VEuPathDB" id="FungiDB:SPBC1348.09"/>
<dbReference type="InParanoid" id="P0CU00"/>
<dbReference type="OMA" id="MKDLMHS"/>
<dbReference type="PhylomeDB" id="P0CU00"/>
<dbReference type="PRO" id="PR:P0CU00"/>
<dbReference type="Proteomes" id="UP000002485">
    <property type="component" value="Chromosome I"/>
</dbReference>
<dbReference type="GO" id="GO:0005829">
    <property type="term" value="C:cytosol"/>
    <property type="evidence" value="ECO:0007005"/>
    <property type="project" value="PomBase"/>
</dbReference>
<dbReference type="GO" id="GO:0005634">
    <property type="term" value="C:nucleus"/>
    <property type="evidence" value="ECO:0007005"/>
    <property type="project" value="PomBase"/>
</dbReference>
<dbReference type="GO" id="GO:0000140">
    <property type="term" value="F:acylglycerone-phosphate reductase (NADP+) activity"/>
    <property type="evidence" value="ECO:0000266"/>
    <property type="project" value="PomBase"/>
</dbReference>
<dbReference type="GO" id="GO:0006654">
    <property type="term" value="P:phosphatidic acid biosynthetic process"/>
    <property type="evidence" value="ECO:0000266"/>
    <property type="project" value="PomBase"/>
</dbReference>
<dbReference type="Gene3D" id="3.40.50.720">
    <property type="entry name" value="NAD(P)-binding Rossmann-like Domain"/>
    <property type="match status" value="1"/>
</dbReference>
<dbReference type="InterPro" id="IPR036291">
    <property type="entry name" value="NAD(P)-bd_dom_sf"/>
</dbReference>
<dbReference type="InterPro" id="IPR002347">
    <property type="entry name" value="SDR_fam"/>
</dbReference>
<dbReference type="InterPro" id="IPR051911">
    <property type="entry name" value="SDR_oxidoreductase"/>
</dbReference>
<dbReference type="PANTHER" id="PTHR43976">
    <property type="entry name" value="SHORT CHAIN DEHYDROGENASE"/>
    <property type="match status" value="1"/>
</dbReference>
<dbReference type="PANTHER" id="PTHR43976:SF16">
    <property type="entry name" value="SHORT-CHAIN DEHYDROGENASE_REDUCTASE FAMILY PROTEIN"/>
    <property type="match status" value="1"/>
</dbReference>
<dbReference type="Pfam" id="PF00106">
    <property type="entry name" value="adh_short"/>
    <property type="match status" value="1"/>
</dbReference>
<dbReference type="PRINTS" id="PR00081">
    <property type="entry name" value="GDHRDH"/>
</dbReference>
<dbReference type="PRINTS" id="PR00080">
    <property type="entry name" value="SDRFAMILY"/>
</dbReference>
<dbReference type="SUPFAM" id="SSF51735">
    <property type="entry name" value="NAD(P)-binding Rossmann-fold domains"/>
    <property type="match status" value="1"/>
</dbReference>
<name>YI78_SCHPO</name>
<protein>
    <recommendedName>
        <fullName>Uncharacterized oxidoreductase SPAC977.08</fullName>
        <ecNumber>1.-.-.-</ecNumber>
    </recommendedName>
</protein>